<dbReference type="EC" id="5.4.3.8" evidence="1"/>
<dbReference type="EMBL" id="CP000951">
    <property type="protein sequence ID" value="ACB00187.1"/>
    <property type="molecule type" value="Genomic_DNA"/>
</dbReference>
<dbReference type="RefSeq" id="WP_012307805.1">
    <property type="nucleotide sequence ID" value="NZ_JAHHPU010000006.1"/>
</dbReference>
<dbReference type="SMR" id="B1XIT5"/>
<dbReference type="STRING" id="32049.SYNPCC7002_A2206"/>
<dbReference type="KEGG" id="syp:SYNPCC7002_A2206"/>
<dbReference type="eggNOG" id="COG0001">
    <property type="taxonomic scope" value="Bacteria"/>
</dbReference>
<dbReference type="HOGENOM" id="CLU_016922_1_5_3"/>
<dbReference type="UniPathway" id="UPA00251">
    <property type="reaction ID" value="UER00317"/>
</dbReference>
<dbReference type="UniPathway" id="UPA00668"/>
<dbReference type="Proteomes" id="UP000001688">
    <property type="component" value="Chromosome"/>
</dbReference>
<dbReference type="GO" id="GO:0005737">
    <property type="term" value="C:cytoplasm"/>
    <property type="evidence" value="ECO:0007669"/>
    <property type="project" value="UniProtKB-SubCell"/>
</dbReference>
<dbReference type="GO" id="GO:0042286">
    <property type="term" value="F:glutamate-1-semialdehyde 2,1-aminomutase activity"/>
    <property type="evidence" value="ECO:0007669"/>
    <property type="project" value="UniProtKB-UniRule"/>
</dbReference>
<dbReference type="GO" id="GO:0030170">
    <property type="term" value="F:pyridoxal phosphate binding"/>
    <property type="evidence" value="ECO:0007669"/>
    <property type="project" value="InterPro"/>
</dbReference>
<dbReference type="GO" id="GO:0008483">
    <property type="term" value="F:transaminase activity"/>
    <property type="evidence" value="ECO:0007669"/>
    <property type="project" value="InterPro"/>
</dbReference>
<dbReference type="GO" id="GO:0015995">
    <property type="term" value="P:chlorophyll biosynthetic process"/>
    <property type="evidence" value="ECO:0007669"/>
    <property type="project" value="UniProtKB-UniRule"/>
</dbReference>
<dbReference type="GO" id="GO:0006782">
    <property type="term" value="P:protoporphyrinogen IX biosynthetic process"/>
    <property type="evidence" value="ECO:0007669"/>
    <property type="project" value="UniProtKB-UniRule"/>
</dbReference>
<dbReference type="CDD" id="cd00610">
    <property type="entry name" value="OAT_like"/>
    <property type="match status" value="1"/>
</dbReference>
<dbReference type="FunFam" id="3.40.640.10:FF:000021">
    <property type="entry name" value="Glutamate-1-semialdehyde 2,1-aminomutase"/>
    <property type="match status" value="1"/>
</dbReference>
<dbReference type="FunFam" id="3.90.1150.10:FF:000012">
    <property type="entry name" value="Glutamate-1-semialdehyde 2,1-aminomutase"/>
    <property type="match status" value="1"/>
</dbReference>
<dbReference type="Gene3D" id="3.90.1150.10">
    <property type="entry name" value="Aspartate Aminotransferase, domain 1"/>
    <property type="match status" value="1"/>
</dbReference>
<dbReference type="Gene3D" id="3.40.640.10">
    <property type="entry name" value="Type I PLP-dependent aspartate aminotransferase-like (Major domain)"/>
    <property type="match status" value="1"/>
</dbReference>
<dbReference type="HAMAP" id="MF_00375">
    <property type="entry name" value="HemL_aminotrans_3"/>
    <property type="match status" value="1"/>
</dbReference>
<dbReference type="InterPro" id="IPR004639">
    <property type="entry name" value="4pyrrol_synth_GluAld_NH2Trfase"/>
</dbReference>
<dbReference type="InterPro" id="IPR005814">
    <property type="entry name" value="Aminotrans_3"/>
</dbReference>
<dbReference type="InterPro" id="IPR049704">
    <property type="entry name" value="Aminotrans_3_PPA_site"/>
</dbReference>
<dbReference type="InterPro" id="IPR015424">
    <property type="entry name" value="PyrdxlP-dep_Trfase"/>
</dbReference>
<dbReference type="InterPro" id="IPR015421">
    <property type="entry name" value="PyrdxlP-dep_Trfase_major"/>
</dbReference>
<dbReference type="InterPro" id="IPR015422">
    <property type="entry name" value="PyrdxlP-dep_Trfase_small"/>
</dbReference>
<dbReference type="NCBIfam" id="TIGR00713">
    <property type="entry name" value="hemL"/>
    <property type="match status" value="1"/>
</dbReference>
<dbReference type="NCBIfam" id="NF000818">
    <property type="entry name" value="PRK00062.1"/>
    <property type="match status" value="1"/>
</dbReference>
<dbReference type="PANTHER" id="PTHR43713">
    <property type="entry name" value="GLUTAMATE-1-SEMIALDEHYDE 2,1-AMINOMUTASE"/>
    <property type="match status" value="1"/>
</dbReference>
<dbReference type="PANTHER" id="PTHR43713:SF3">
    <property type="entry name" value="GLUTAMATE-1-SEMIALDEHYDE 2,1-AMINOMUTASE 1, CHLOROPLASTIC-RELATED"/>
    <property type="match status" value="1"/>
</dbReference>
<dbReference type="Pfam" id="PF00202">
    <property type="entry name" value="Aminotran_3"/>
    <property type="match status" value="1"/>
</dbReference>
<dbReference type="SUPFAM" id="SSF53383">
    <property type="entry name" value="PLP-dependent transferases"/>
    <property type="match status" value="1"/>
</dbReference>
<dbReference type="PROSITE" id="PS00600">
    <property type="entry name" value="AA_TRANSFER_CLASS_3"/>
    <property type="match status" value="1"/>
</dbReference>
<evidence type="ECO:0000255" key="1">
    <source>
        <dbReference type="HAMAP-Rule" id="MF_00375"/>
    </source>
</evidence>
<reference key="1">
    <citation type="submission" date="2008-02" db="EMBL/GenBank/DDBJ databases">
        <title>Complete sequence of Synechococcus sp. PCC 7002.</title>
        <authorList>
            <person name="Li T."/>
            <person name="Zhao J."/>
            <person name="Zhao C."/>
            <person name="Liu Z."/>
            <person name="Zhao F."/>
            <person name="Marquardt J."/>
            <person name="Nomura C.T."/>
            <person name="Persson S."/>
            <person name="Detter J.C."/>
            <person name="Richardson P.M."/>
            <person name="Lanz C."/>
            <person name="Schuster S.C."/>
            <person name="Wang J."/>
            <person name="Li S."/>
            <person name="Huang X."/>
            <person name="Cai T."/>
            <person name="Yu Z."/>
            <person name="Luo J."/>
            <person name="Zhao J."/>
            <person name="Bryant D.A."/>
        </authorList>
    </citation>
    <scope>NUCLEOTIDE SEQUENCE [LARGE SCALE GENOMIC DNA]</scope>
    <source>
        <strain>ATCC 27264 / PCC 7002 / PR-6</strain>
    </source>
</reference>
<comment type="catalytic activity">
    <reaction evidence="1">
        <text>(S)-4-amino-5-oxopentanoate = 5-aminolevulinate</text>
        <dbReference type="Rhea" id="RHEA:14265"/>
        <dbReference type="ChEBI" id="CHEBI:57501"/>
        <dbReference type="ChEBI" id="CHEBI:356416"/>
        <dbReference type="EC" id="5.4.3.8"/>
    </reaction>
</comment>
<comment type="cofactor">
    <cofactor evidence="1">
        <name>pyridoxal 5'-phosphate</name>
        <dbReference type="ChEBI" id="CHEBI:597326"/>
    </cofactor>
</comment>
<comment type="pathway">
    <text evidence="1">Porphyrin-containing compound metabolism; protoporphyrin-IX biosynthesis; 5-aminolevulinate from L-glutamyl-tRNA(Glu): step 2/2.</text>
</comment>
<comment type="pathway">
    <text evidence="1">Porphyrin-containing compound metabolism; chlorophyll biosynthesis.</text>
</comment>
<comment type="subunit">
    <text evidence="1">Homodimer.</text>
</comment>
<comment type="subcellular location">
    <subcellularLocation>
        <location evidence="1">Cytoplasm</location>
    </subcellularLocation>
</comment>
<comment type="similarity">
    <text evidence="1">Belongs to the class-III pyridoxal-phosphate-dependent aminotransferase family. HemL subfamily.</text>
</comment>
<accession>B1XIT5</accession>
<keyword id="KW-0149">Chlorophyll biosynthesis</keyword>
<keyword id="KW-0963">Cytoplasm</keyword>
<keyword id="KW-0413">Isomerase</keyword>
<keyword id="KW-0627">Porphyrin biosynthesis</keyword>
<keyword id="KW-0663">Pyridoxal phosphate</keyword>
<keyword id="KW-1185">Reference proteome</keyword>
<name>GSA_PICP2</name>
<organism>
    <name type="scientific">Picosynechococcus sp. (strain ATCC 27264 / PCC 7002 / PR-6)</name>
    <name type="common">Agmenellum quadruplicatum</name>
    <dbReference type="NCBI Taxonomy" id="32049"/>
    <lineage>
        <taxon>Bacteria</taxon>
        <taxon>Bacillati</taxon>
        <taxon>Cyanobacteriota</taxon>
        <taxon>Cyanophyceae</taxon>
        <taxon>Oscillatoriophycideae</taxon>
        <taxon>Chroococcales</taxon>
        <taxon>Geminocystaceae</taxon>
        <taxon>Picosynechococcus</taxon>
    </lineage>
</organism>
<protein>
    <recommendedName>
        <fullName evidence="1">Glutamate-1-semialdehyde 2,1-aminomutase</fullName>
        <shortName evidence="1">GSA</shortName>
        <ecNumber evidence="1">5.4.3.8</ecNumber>
    </recommendedName>
    <alternativeName>
        <fullName evidence="1">Glutamate-1-semialdehyde aminotransferase</fullName>
        <shortName evidence="1">GSA-AT</shortName>
    </alternativeName>
</protein>
<feature type="chain" id="PRO_1000121927" description="Glutamate-1-semialdehyde 2,1-aminomutase">
    <location>
        <begin position="1"/>
        <end position="432"/>
    </location>
</feature>
<feature type="modified residue" description="N6-(pyridoxal phosphate)lysine" evidence="1">
    <location>
        <position position="272"/>
    </location>
</feature>
<proteinExistence type="inferred from homology"/>
<gene>
    <name evidence="1" type="primary">hemL</name>
    <name type="ordered locus">SYNPCC7002_A2206</name>
</gene>
<sequence>MVTTALNTTKSEEIFSAAQKLMPGGVSSPVRAFKSVGGQPIVFDRVKGSRVWDVDGNEYIDYVGTWGPAICGHANDEVNAALRETLEKGTSFGAPCLKENILAEMVINAVPSIEMVRFVNSGTEACMSVLRLMRAFTGREKIIKFEGCYHGHADMFLVQAGSGVATLGLPDSPGVPKTTTAATLTAPYNDLEAVKKLFAENPGEIAGVILEPVVGNSGFVLPDAGFLEGLREITKEHDALLVFDEVMTGFRISYGGAQEKFGVTPDLTTLGKVIGGGLPVGAYGGRKDIMSMVAPAGPMYQAGTLSGNPLAMTAGIKTLELLQRPGMYGQLETITKKLIDGLLSIAREAGHEVTGGNISGMFGMFFTGEPVRNYEDAKKSDLHKFSRYHRGMLEQGIYLAPSQFEAGFTSLAHTDEDIEKTLAAAKVVLNNL</sequence>